<gene>
    <name evidence="18" type="primary">POLR3K</name>
    <name type="synonym">RPC11</name>
    <name type="ORF">My010</name>
</gene>
<organism>
    <name type="scientific">Homo sapiens</name>
    <name type="common">Human</name>
    <dbReference type="NCBI Taxonomy" id="9606"/>
    <lineage>
        <taxon>Eukaryota</taxon>
        <taxon>Metazoa</taxon>
        <taxon>Chordata</taxon>
        <taxon>Craniata</taxon>
        <taxon>Vertebrata</taxon>
        <taxon>Euteleostomi</taxon>
        <taxon>Mammalia</taxon>
        <taxon>Eutheria</taxon>
        <taxon>Euarchontoglires</taxon>
        <taxon>Primates</taxon>
        <taxon>Haplorrhini</taxon>
        <taxon>Catarrhini</taxon>
        <taxon>Hominidae</taxon>
        <taxon>Homo</taxon>
    </lineage>
</organism>
<sequence>MLLFCPGCGNGLIVEEGQRCHRFACNTCPYVHNITRKVTNRKYPKLKEVDDVLGGAAAWENVDSTAESCPKCEHPRAYFMQLQTRSADEPMTTFYKCCNAQCGHRWRD</sequence>
<reference key="1">
    <citation type="journal article" date="1998" name="Genes Dev.">
        <title>The RNA cleavage activity of RNA polymerase III is mediated by an essential TFIIS-like subunit and is important for transcription termination.</title>
        <authorList>
            <person name="Chedin S."/>
            <person name="Riva M."/>
            <person name="Schultz P."/>
            <person name="Sentenac A."/>
            <person name="Carles C."/>
        </authorList>
    </citation>
    <scope>NUCLEOTIDE SEQUENCE [GENOMIC DNA]</scope>
</reference>
<reference key="2">
    <citation type="journal article" date="1998" name="Bioorg. Khim.">
        <title>Molecular identification and characteristics of hRPC11, the smallest specific subunit of human RNA polymerase III.</title>
        <authorList>
            <person name="Spakovskii G.V."/>
            <person name="Lebedenko E.N."/>
        </authorList>
    </citation>
    <scope>NUCLEOTIDE SEQUENCE [MRNA]</scope>
</reference>
<reference key="3">
    <citation type="submission" date="1998-04" db="EMBL/GenBank/DDBJ databases">
        <authorList>
            <person name="Mao Y.M."/>
            <person name="Xie Y."/>
            <person name="Zheng Z.H."/>
            <person name="Gu S.H."/>
            <person name="Ying K."/>
            <person name="Lin Q."/>
            <person name="Dai J.L."/>
            <person name="Tang R."/>
            <person name="Dong H."/>
            <person name="Wu X.Z."/>
        </authorList>
    </citation>
    <scope>NUCLEOTIDE SEQUENCE [LARGE SCALE MRNA]</scope>
    <source>
        <tissue>Fetal brain</tissue>
    </source>
</reference>
<reference key="4">
    <citation type="journal article" date="2006" name="Science">
        <title>A regulatory SNP causes a human genetic disease by creating a new transcriptional promoter.</title>
        <authorList>
            <person name="De Gobbi M."/>
            <person name="Viprakasit V."/>
            <person name="Hughes J.R."/>
            <person name="Fisher C."/>
            <person name="Buckle V.J."/>
            <person name="Ayyub H."/>
            <person name="Gibbons R.J."/>
            <person name="Vernimmen D."/>
            <person name="Yoshinaga Y."/>
            <person name="de Jong P."/>
            <person name="Cheng J.-F."/>
            <person name="Rubin E.M."/>
            <person name="Wood W.G."/>
            <person name="Bowden D."/>
            <person name="Higgs D.R."/>
        </authorList>
    </citation>
    <scope>NUCLEOTIDE SEQUENCE [GENOMIC DNA]</scope>
</reference>
<reference key="5">
    <citation type="journal article" date="2001" name="Hum. Mol. Genet.">
        <title>Sequence, structure and pathology of the fully annotated terminal 2 Mb of the short arm of human chromosome 16.</title>
        <authorList>
            <person name="Daniels R.J."/>
            <person name="Peden J.F."/>
            <person name="Lloyd C."/>
            <person name="Horsley S.W."/>
            <person name="Clark K."/>
            <person name="Tufarelli C."/>
            <person name="Kearney L."/>
            <person name="Buckle V.J."/>
            <person name="Doggett N.A."/>
            <person name="Flint J."/>
            <person name="Higgs D.R."/>
        </authorList>
    </citation>
    <scope>NUCLEOTIDE SEQUENCE [LARGE SCALE GENOMIC DNA]</scope>
</reference>
<reference key="6">
    <citation type="journal article" date="2004" name="Nature">
        <title>The sequence and analysis of duplication-rich human chromosome 16.</title>
        <authorList>
            <person name="Martin J."/>
            <person name="Han C."/>
            <person name="Gordon L.A."/>
            <person name="Terry A."/>
            <person name="Prabhakar S."/>
            <person name="She X."/>
            <person name="Xie G."/>
            <person name="Hellsten U."/>
            <person name="Chan Y.M."/>
            <person name="Altherr M."/>
            <person name="Couronne O."/>
            <person name="Aerts A."/>
            <person name="Bajorek E."/>
            <person name="Black S."/>
            <person name="Blumer H."/>
            <person name="Branscomb E."/>
            <person name="Brown N.C."/>
            <person name="Bruno W.J."/>
            <person name="Buckingham J.M."/>
            <person name="Callen D.F."/>
            <person name="Campbell C.S."/>
            <person name="Campbell M.L."/>
            <person name="Campbell E.W."/>
            <person name="Caoile C."/>
            <person name="Challacombe J.F."/>
            <person name="Chasteen L.A."/>
            <person name="Chertkov O."/>
            <person name="Chi H.C."/>
            <person name="Christensen M."/>
            <person name="Clark L.M."/>
            <person name="Cohn J.D."/>
            <person name="Denys M."/>
            <person name="Detter J.C."/>
            <person name="Dickson M."/>
            <person name="Dimitrijevic-Bussod M."/>
            <person name="Escobar J."/>
            <person name="Fawcett J.J."/>
            <person name="Flowers D."/>
            <person name="Fotopulos D."/>
            <person name="Glavina T."/>
            <person name="Gomez M."/>
            <person name="Gonzales E."/>
            <person name="Goodstein D."/>
            <person name="Goodwin L.A."/>
            <person name="Grady D.L."/>
            <person name="Grigoriev I."/>
            <person name="Groza M."/>
            <person name="Hammon N."/>
            <person name="Hawkins T."/>
            <person name="Haydu L."/>
            <person name="Hildebrand C.E."/>
            <person name="Huang W."/>
            <person name="Israni S."/>
            <person name="Jett J."/>
            <person name="Jewett P.B."/>
            <person name="Kadner K."/>
            <person name="Kimball H."/>
            <person name="Kobayashi A."/>
            <person name="Krawczyk M.-C."/>
            <person name="Leyba T."/>
            <person name="Longmire J.L."/>
            <person name="Lopez F."/>
            <person name="Lou Y."/>
            <person name="Lowry S."/>
            <person name="Ludeman T."/>
            <person name="Manohar C.F."/>
            <person name="Mark G.A."/>
            <person name="McMurray K.L."/>
            <person name="Meincke L.J."/>
            <person name="Morgan J."/>
            <person name="Moyzis R.K."/>
            <person name="Mundt M.O."/>
            <person name="Munk A.C."/>
            <person name="Nandkeshwar R.D."/>
            <person name="Pitluck S."/>
            <person name="Pollard M."/>
            <person name="Predki P."/>
            <person name="Parson-Quintana B."/>
            <person name="Ramirez L."/>
            <person name="Rash S."/>
            <person name="Retterer J."/>
            <person name="Ricke D.O."/>
            <person name="Robinson D.L."/>
            <person name="Rodriguez A."/>
            <person name="Salamov A."/>
            <person name="Saunders E.H."/>
            <person name="Scott D."/>
            <person name="Shough T."/>
            <person name="Stallings R.L."/>
            <person name="Stalvey M."/>
            <person name="Sutherland R.D."/>
            <person name="Tapia R."/>
            <person name="Tesmer J.G."/>
            <person name="Thayer N."/>
            <person name="Thompson L.S."/>
            <person name="Tice H."/>
            <person name="Torney D.C."/>
            <person name="Tran-Gyamfi M."/>
            <person name="Tsai M."/>
            <person name="Ulanovsky L.E."/>
            <person name="Ustaszewska A."/>
            <person name="Vo N."/>
            <person name="White P.S."/>
            <person name="Williams A.L."/>
            <person name="Wills P.L."/>
            <person name="Wu J.-R."/>
            <person name="Wu K."/>
            <person name="Yang J."/>
            <person name="DeJong P."/>
            <person name="Bruce D."/>
            <person name="Doggett N.A."/>
            <person name="Deaven L."/>
            <person name="Schmutz J."/>
            <person name="Grimwood J."/>
            <person name="Richardson P."/>
            <person name="Rokhsar D.S."/>
            <person name="Eichler E.E."/>
            <person name="Gilna P."/>
            <person name="Lucas S.M."/>
            <person name="Myers R.M."/>
            <person name="Rubin E.M."/>
            <person name="Pennacchio L.A."/>
        </authorList>
    </citation>
    <scope>NUCLEOTIDE SEQUENCE [LARGE SCALE GENOMIC DNA]</scope>
</reference>
<reference key="7">
    <citation type="journal article" date="2004" name="Genome Res.">
        <title>The status, quality, and expansion of the NIH full-length cDNA project: the Mammalian Gene Collection (MGC).</title>
        <authorList>
            <consortium name="The MGC Project Team"/>
        </authorList>
    </citation>
    <scope>NUCLEOTIDE SEQUENCE [LARGE SCALE MRNA]</scope>
    <source>
        <tissue>Uterus</tissue>
    </source>
</reference>
<reference key="8">
    <citation type="journal article" date="2002" name="Mol. Cell. Biol.">
        <title>Characterization of human RNA polymerase III identifies orthologues for Saccharomyces cerevisiae RNA polymerase III subunits.</title>
        <authorList>
            <person name="Hu P."/>
            <person name="Wu S."/>
            <person name="Sun Y."/>
            <person name="Yuan C.-C."/>
            <person name="Kobayashi R."/>
            <person name="Myers M.P."/>
            <person name="Hernandez N."/>
        </authorList>
    </citation>
    <scope>IDENTIFICATION IN THE RNA POL III COMPLEX</scope>
    <scope>IDENTIFICATION BY MASS SPECTROMETRY</scope>
    <scope>FUNCTION</scope>
    <scope>SUBUNIT</scope>
</reference>
<reference key="9">
    <citation type="journal article" date="2009" name="Cell">
        <title>RNA polymerase III detects cytosolic DNA and induces type I interferons through the RIG-I pathway.</title>
        <authorList>
            <person name="Chiu Y.-H."/>
            <person name="Macmillan J.B."/>
            <person name="Chen Z.J."/>
        </authorList>
    </citation>
    <scope>FUNCTION</scope>
</reference>
<reference key="10">
    <citation type="journal article" date="2009" name="Nat. Immunol.">
        <title>RIG-I-dependent sensing of poly(dA:dT) through the induction of an RNA polymerase III-transcribed RNA intermediate.</title>
        <authorList>
            <person name="Ablasser A."/>
            <person name="Bauernfeind F."/>
            <person name="Hartmann G."/>
            <person name="Latz E."/>
            <person name="Fitzgerald K.A."/>
            <person name="Hornung V."/>
        </authorList>
    </citation>
    <scope>FUNCTION</scope>
</reference>
<reference key="11">
    <citation type="journal article" date="2010" name="Genome Res.">
        <title>Defining the RNA polymerase III transcriptome: Genome-wide localization of the RNA polymerase III transcription machinery in human cells.</title>
        <authorList>
            <person name="Canella D."/>
            <person name="Praz V."/>
            <person name="Reina J.H."/>
            <person name="Cousin P."/>
            <person name="Hernandez N."/>
        </authorList>
    </citation>
    <scope>FUNCTION OF POL III</scope>
</reference>
<reference key="12">
    <citation type="journal article" date="2011" name="BMC Syst. Biol.">
        <title>Initial characterization of the human central proteome.</title>
        <authorList>
            <person name="Burkard T.R."/>
            <person name="Planyavsky M."/>
            <person name="Kaupe I."/>
            <person name="Breitwieser F.P."/>
            <person name="Buerckstuemmer T."/>
            <person name="Bennett K.L."/>
            <person name="Superti-Furga G."/>
            <person name="Colinge J."/>
        </authorList>
    </citation>
    <scope>IDENTIFICATION BY MASS SPECTROMETRY [LARGE SCALE ANALYSIS]</scope>
</reference>
<reference key="13">
    <citation type="journal article" date="2020" name="Nat. Commun.">
        <title>Structure of human RNA polymerase III.</title>
        <authorList>
            <person name="Ramsay E.P."/>
            <person name="Abascal-Palacios G."/>
            <person name="Daiss J.L."/>
            <person name="King H."/>
            <person name="Gouge J."/>
            <person name="Pilsl M."/>
            <person name="Beuron F."/>
            <person name="Morris E."/>
            <person name="Gunkel P."/>
            <person name="Engel C."/>
            <person name="Vannini A."/>
        </authorList>
    </citation>
    <scope>STRUCTURE BY ELECTRON MICROSCOPY (4.00 ANGSTROMS)</scope>
    <scope>FUNCTION</scope>
    <scope>SUBUNIT</scope>
    <scope>SUBCELLULAR LOCATION</scope>
</reference>
<reference key="14">
    <citation type="journal article" date="2021" name="Cell Res.">
        <title>Structure of human RNA polymerase III elongation complex.</title>
        <authorList>
            <person name="Li L."/>
            <person name="Yu Z."/>
            <person name="Zhao D."/>
            <person name="Ren Y."/>
            <person name="Hou H."/>
            <person name="Xu Y."/>
        </authorList>
    </citation>
    <scope>STRUCTURE BY ELECTRON MICROSCOPY (3.35 ANGSTROMS) IN COMPLEX WITH ZN(2+)</scope>
    <scope>FUNCTION</scope>
    <scope>SUBUNIT</scope>
</reference>
<reference key="15">
    <citation type="journal article" date="2021" name="Nat. Commun.">
        <title>Structural insights into RNA polymerase III-mediated transcription termination through trapping poly-deoxythymidine.</title>
        <authorList>
            <person name="Hou H."/>
            <person name="Li Y."/>
            <person name="Wang M."/>
            <person name="Liu A."/>
            <person name="Yu Z."/>
            <person name="Chen K."/>
            <person name="Zhao D."/>
            <person name="Xu Y."/>
        </authorList>
    </citation>
    <scope>STRUCTURE BY ELECTRON MICROSCOPY (3.60 ANGSTROMS)</scope>
    <scope>FUNCTION</scope>
    <scope>SUBUNIT</scope>
</reference>
<reference key="16">
    <citation type="journal article" date="2021" name="Nat. Struct. Mol. Biol.">
        <title>Cryo-EM structures of human RNA polymerase III in its unbound and transcribing states.</title>
        <authorList>
            <person name="Girbig M."/>
            <person name="Misiaszek A.D."/>
            <person name="Vorlander M.K."/>
            <person name="Lafita A."/>
            <person name="Grotsch H."/>
            <person name="Baudin F."/>
            <person name="Bateman A."/>
            <person name="Muller C.W."/>
        </authorList>
    </citation>
    <scope>STRUCTURE BY ELECTRON MICROSCOPY (2.80 ANGSTROMS) IN COMPLEX WITH ZN(2+)</scope>
    <scope>FUNCTION</scope>
    <scope>SUBUNIT</scope>
</reference>
<reference key="17">
    <citation type="journal article" date="2021" name="Nat. Struct. Mol. Biol.">
        <title>Structural insights into transcriptional regulation of human RNA polymerase III.</title>
        <authorList>
            <person name="Wang Q."/>
            <person name="Li S."/>
            <person name="Wan F."/>
            <person name="Xu Y."/>
            <person name="Wu Z."/>
            <person name="Cao M."/>
            <person name="Lan P."/>
            <person name="Lei M."/>
            <person name="Wu J."/>
        </authorList>
    </citation>
    <scope>STRUCTURE BY ELECTRON MICROSCOPY (2.90 ANGSTROMS) IN COMPLEX WITH ZN(2+)</scope>
    <scope>FUNCTION</scope>
    <scope>SUBUNIT</scope>
</reference>
<reference key="18">
    <citation type="journal article" date="2018" name="Neurol. Genet.">
        <title>Mutation in POLR3K causes hypomyelinating leukodystrophy and abnormal ribosomal RNA regulation.</title>
        <authorList>
            <person name="Dorboz I."/>
            <person name="Dumay-Odelot H."/>
            <person name="Boussaid K."/>
            <person name="Bouyacoub Y."/>
            <person name="Barreau P."/>
            <person name="Samaan S."/>
            <person name="Jmel H."/>
            <person name="Eymard-Pierre E."/>
            <person name="Cances C."/>
            <person name="Bar C."/>
            <person name="Poulat A.L."/>
            <person name="Rousselle C."/>
            <person name="Renaldo F."/>
            <person name="Elmaleh-Berges M."/>
            <person name="Teichmann M."/>
            <person name="Boespflug-Tanguy O."/>
        </authorList>
    </citation>
    <scope>INVOLVEMENT IN HLD21</scope>
    <scope>VARIANT HLD21 TRP-41</scope>
    <scope>CHARACTERIZATION OF VARIANT HLD21 TRP-41</scope>
    <scope>FUNCTION</scope>
</reference>
<keyword id="KW-0002">3D-structure</keyword>
<keyword id="KW-0051">Antiviral defense</keyword>
<keyword id="KW-0225">Disease variant</keyword>
<keyword id="KW-0240">DNA-directed RNA polymerase</keyword>
<keyword id="KW-0391">Immunity</keyword>
<keyword id="KW-0399">Innate immunity</keyword>
<keyword id="KW-1026">Leukodystrophy</keyword>
<keyword id="KW-0479">Metal-binding</keyword>
<keyword id="KW-0523">Neurodegeneration</keyword>
<keyword id="KW-0539">Nucleus</keyword>
<keyword id="KW-1267">Proteomics identification</keyword>
<keyword id="KW-1185">Reference proteome</keyword>
<keyword id="KW-0804">Transcription</keyword>
<keyword id="KW-0862">Zinc</keyword>
<keyword id="KW-0863">Zinc-finger</keyword>
<feature type="chain" id="PRO_0000121475" description="DNA-directed RNA polymerase III subunit RPC10">
    <location>
        <begin position="1"/>
        <end position="108"/>
    </location>
</feature>
<feature type="zinc finger region" description="C4-type" evidence="2">
    <location>
        <begin position="5"/>
        <end position="28"/>
    </location>
</feature>
<feature type="zinc finger region" description="TFIIS-type" evidence="3">
    <location>
        <begin position="65"/>
        <end position="107"/>
    </location>
</feature>
<feature type="short sequence motif" description="Hairpin" evidence="11">
    <location>
        <begin position="88"/>
        <end position="89"/>
    </location>
</feature>
<feature type="binding site" evidence="4 11 12 13 14 19 20 21 22">
    <location>
        <position position="5"/>
    </location>
    <ligand>
        <name>Zn(2+)</name>
        <dbReference type="ChEBI" id="CHEBI:29105"/>
        <label>1</label>
    </ligand>
</feature>
<feature type="binding site" evidence="4 11 12 13 14 19 20 21 22">
    <location>
        <position position="8"/>
    </location>
    <ligand>
        <name>Zn(2+)</name>
        <dbReference type="ChEBI" id="CHEBI:29105"/>
        <label>1</label>
    </ligand>
</feature>
<feature type="binding site" evidence="4 11 12 13 14 19 20 21 22">
    <location>
        <position position="25"/>
    </location>
    <ligand>
        <name>Zn(2+)</name>
        <dbReference type="ChEBI" id="CHEBI:29105"/>
        <label>1</label>
    </ligand>
</feature>
<feature type="binding site" evidence="4 11 12 13 14 19 20 21 22">
    <location>
        <position position="28"/>
    </location>
    <ligand>
        <name>Zn(2+)</name>
        <dbReference type="ChEBI" id="CHEBI:29105"/>
        <label>1</label>
    </ligand>
</feature>
<feature type="binding site" evidence="3">
    <location>
        <position position="69"/>
    </location>
    <ligand>
        <name>Zn(2+)</name>
        <dbReference type="ChEBI" id="CHEBI:29105"/>
        <label>2</label>
    </ligand>
</feature>
<feature type="binding site" evidence="3 11 12 14 19 20 22">
    <location>
        <position position="72"/>
    </location>
    <ligand>
        <name>Zn(2+)</name>
        <dbReference type="ChEBI" id="CHEBI:29105"/>
        <label>2</label>
    </ligand>
</feature>
<feature type="binding site" evidence="3 12 20">
    <location>
        <position position="98"/>
    </location>
    <ligand>
        <name>Zn(2+)</name>
        <dbReference type="ChEBI" id="CHEBI:29105"/>
        <label>2</label>
    </ligand>
</feature>
<feature type="binding site" evidence="3 11 12 19 20">
    <location>
        <position position="102"/>
    </location>
    <ligand>
        <name>Zn(2+)</name>
        <dbReference type="ChEBI" id="CHEBI:29105"/>
        <label>2</label>
    </ligand>
</feature>
<feature type="sequence variant" id="VAR_027918" description="In dbSNP:rs183360.">
    <original>A</original>
    <variation>S</variation>
    <location>
        <position position="24"/>
    </location>
</feature>
<feature type="sequence variant" id="VAR_085543" description="In HLD21; decrease in expression levels of RNA polymerase III-transcribed genes such as 5S and 7S ribosomal RNAs; dbSNP:rs1432006875." evidence="9">
    <original>R</original>
    <variation>W</variation>
    <location>
        <position position="41"/>
    </location>
</feature>
<feature type="turn" evidence="23">
    <location>
        <begin position="6"/>
        <end position="8"/>
    </location>
</feature>
<feature type="strand" evidence="23">
    <location>
        <begin position="13"/>
        <end position="16"/>
    </location>
</feature>
<feature type="strand" evidence="23">
    <location>
        <begin position="18"/>
        <end position="24"/>
    </location>
</feature>
<feature type="strand" evidence="23">
    <location>
        <begin position="26"/>
        <end position="33"/>
    </location>
</feature>
<feature type="strand" evidence="23">
    <location>
        <begin position="38"/>
        <end position="41"/>
    </location>
</feature>
<feature type="helix" evidence="23">
    <location>
        <begin position="50"/>
        <end position="53"/>
    </location>
</feature>
<feature type="turn" evidence="23">
    <location>
        <begin position="54"/>
        <end position="56"/>
    </location>
</feature>
<feature type="strand" evidence="24">
    <location>
        <begin position="64"/>
        <end position="66"/>
    </location>
</feature>
<feature type="turn" evidence="23">
    <location>
        <begin position="70"/>
        <end position="72"/>
    </location>
</feature>
<feature type="strand" evidence="23">
    <location>
        <begin position="77"/>
        <end position="82"/>
    </location>
</feature>
<feature type="strand" evidence="23">
    <location>
        <begin position="84"/>
        <end position="86"/>
    </location>
</feature>
<feature type="strand" evidence="24">
    <location>
        <begin position="87"/>
        <end position="89"/>
    </location>
</feature>
<feature type="strand" evidence="23">
    <location>
        <begin position="92"/>
        <end position="99"/>
    </location>
</feature>
<feature type="strand" evidence="23">
    <location>
        <begin position="102"/>
        <end position="106"/>
    </location>
</feature>
<name>RPC10_HUMAN</name>
<accession>Q9Y2Y1</accession>
<accession>Q1W6H4</accession>
<accession>Q96S35</accession>
<proteinExistence type="evidence at protein level"/>
<protein>
    <recommendedName>
        <fullName>DNA-directed RNA polymerase III subunit RPC10</fullName>
        <shortName>RNA polymerase III subunit C10</shortName>
    </recommendedName>
    <alternativeName>
        <fullName>DNA-directed RNA polymerase III subunit K</fullName>
    </alternativeName>
    <alternativeName>
        <fullName>RNA polymerase III 12.5 kDa subunit</fullName>
        <shortName>RPC12.5</shortName>
    </alternativeName>
    <alternativeName>
        <fullName>RNA polymerase III subunit C11</fullName>
        <shortName>HsC11p</shortName>
        <shortName evidence="15">RPC11</shortName>
        <shortName>hRPC11</shortName>
    </alternativeName>
</protein>
<comment type="function">
    <text evidence="1 6 7 8 9 10 11 12 13 14">Core component of RNA polymerase III (Pol III) which synthesizes small non-coding RNAs using the four ribonucleoside triphosphates as substrates (PubMed:20413673, PubMed:30584594, PubMed:33335104, PubMed:33558764, PubMed:33558766, PubMed:33674783, PubMed:34675218). Can mediate Pol I proofreading of the nascent RNA transcript. Anchors into the Pol III active site to constantly monitor transcription fidelity, cleaves mis-incorporated 5'-ribonucleotides and restarts the transcription process. Once Pol III reaches the poly(dT) termination signal, can induce Pol III clamp opening and transcription termination (By similarity) (PubMed:33335104, PubMed:33558764, PubMed:33558766, PubMed:33674783, PubMed:34675218). Pol III plays an important role in sensing and limiting infection by intracellular bacteria and DNA viruses. Acts as a nuclear and cytosolic DNA sensor involved in innate immune response. Can sense non-self dsDNA that serves as template for transcription into dsRNA. The non-self RNA polymerase III transcripts, such as Epstein-Barr virus-encoded RNAs (EBERs) induce type I interferon and NF-kappa-B through the RIG-I pathway (PubMed:19609254, PubMed:19631370).</text>
</comment>
<comment type="subunit">
    <text evidence="5 10 11 12 13 14">Component of the RNA polymerase III complex consisting of 17 subunits: a ten-subunit horseshoe-shaped catalytic core composed of POLR3A/RPC1, POLR3B/RPC2, POLR1C/RPAC1, POLR1D/RPAC2, POLR3K/RPC10, POLR2E/RPABC1, POLR2F/RPABC2, POLR2H/RPABC3, POLR2K/RPABC4 and POLR2L/RPABC5; a mobile stalk composed of two subunits POLR3H/RPC8 and CRCP/RPC9, protruding from the core and functioning primarily in transcription initiation; and additional subunits homologous to general transcription factors of the RNA polymerase II machinery, POLR3C/RPC3-POLR3F/RPC6-POLR3G/RPC7 heterotrimer required for transcription initiation and POLR3D/RPC4-POLR3E/RPC5 heterodimer involved in both transcription initiation and termination.</text>
</comment>
<comment type="interaction">
    <interactant intactId="EBI-11023785">
        <id>Q9Y2Y1</id>
    </interactant>
    <interactant intactId="EBI-10250303">
        <id>Q6IPU0</id>
        <label>CENPP</label>
    </interactant>
    <organismsDiffer>false</organismsDiffer>
    <experiments>3</experiments>
</comment>
<comment type="interaction">
    <interactant intactId="EBI-11023785">
        <id>Q9Y2Y1</id>
    </interactant>
    <interactant intactId="EBI-727004">
        <id>O00560</id>
        <label>SDCBP</label>
    </interactant>
    <organismsDiffer>false</organismsDiffer>
    <experiments>3</experiments>
</comment>
<comment type="interaction">
    <interactant intactId="EBI-11023785">
        <id>Q9Y2Y1</id>
    </interactant>
    <interactant intactId="EBI-11525489">
        <id>Q86WT6-2</id>
        <label>TRIM69</label>
    </interactant>
    <organismsDiffer>false</organismsDiffer>
    <experiments>3</experiments>
</comment>
<comment type="subcellular location">
    <subcellularLocation>
        <location evidence="17">Nucleus</location>
    </subcellularLocation>
</comment>
<comment type="domain">
    <text evidence="11">The TFIIS-type zinc-binding beta-ribbon domain contains an acidic hairpin motif (residues Asp-88, Glu-89) that likely coordinates the nucleophilic water and magnesium to cleave the scissile phosphodiester bond and release the mis-incorporated 5'-ribonucleotides.</text>
</comment>
<comment type="disease" evidence="9">
    <disease id="DI-06097">
        <name>Leukodystrophy, hypomyelinating, 21</name>
        <acronym>HLD21</acronym>
        <description>An autosomal recessive neurodegenerative disorder characterized by global developmental delay, loss of motor, speech and cognitive milestones in the first decades of life, and diffuse hypomyelination of the white matter and atrophy of the cerebellum and corpus callosum observed on brain imaging. Clinical features include nystagmus, ataxia, dystonia, and spasticity. Other more variable features are feeding difficulties, poor overall growth with microcephaly, optic atrophy, and seizures. The disorder is progressive and may lead to premature death.</description>
        <dbReference type="MIM" id="619310"/>
    </disease>
    <text>The disease is caused by variants affecting the gene represented in this entry.</text>
</comment>
<comment type="similarity">
    <text evidence="16">Belongs to the archaeal RpoM/eukaryotic RPA12/RPB9/RPC11 RNA polymerase family.</text>
</comment>
<comment type="sequence caution" evidence="16">
    <conflict type="erroneous gene model prediction">
        <sequence resource="EMBL-CDS" id="AAK61210"/>
    </conflict>
</comment>
<comment type="sequence caution" evidence="16">
    <conflict type="erroneous gene model prediction">
        <sequence resource="EMBL-CDS" id="CAI95605"/>
    </conflict>
</comment>
<dbReference type="EMBL" id="AF126531">
    <property type="protein sequence ID" value="AAD31424.1"/>
    <property type="molecule type" value="Genomic_DNA"/>
</dbReference>
<dbReference type="EMBL" id="AF051316">
    <property type="protein sequence ID" value="AAF18268.1"/>
    <property type="molecule type" value="mRNA"/>
</dbReference>
<dbReference type="EMBL" id="AF060223">
    <property type="protein sequence ID" value="AAG43123.1"/>
    <property type="molecule type" value="mRNA"/>
</dbReference>
<dbReference type="EMBL" id="DQ431198">
    <property type="protein sequence ID" value="ABD95903.1"/>
    <property type="molecule type" value="Genomic_DNA"/>
</dbReference>
<dbReference type="EMBL" id="AE006462">
    <property type="protein sequence ID" value="AAK61210.1"/>
    <property type="status" value="ALT_SEQ"/>
    <property type="molecule type" value="Genomic_DNA"/>
</dbReference>
<dbReference type="EMBL" id="Z69719">
    <property type="protein sequence ID" value="CAI95605.1"/>
    <property type="status" value="ALT_SEQ"/>
    <property type="molecule type" value="Genomic_DNA"/>
</dbReference>
<dbReference type="EMBL" id="BC011932">
    <property type="protein sequence ID" value="AAH11932.1"/>
    <property type="molecule type" value="mRNA"/>
</dbReference>
<dbReference type="CCDS" id="CCDS10395.1"/>
<dbReference type="RefSeq" id="NP_057394.3">
    <property type="nucleotide sequence ID" value="NM_016310.5"/>
</dbReference>
<dbReference type="PDB" id="7A6H">
    <property type="method" value="EM"/>
    <property type="resolution" value="3.30 A"/>
    <property type="chains" value="I=1-108"/>
</dbReference>
<dbReference type="PDB" id="7AE1">
    <property type="method" value="EM"/>
    <property type="resolution" value="2.80 A"/>
    <property type="chains" value="I=1-108"/>
</dbReference>
<dbReference type="PDB" id="7AE3">
    <property type="method" value="EM"/>
    <property type="resolution" value="3.10 A"/>
    <property type="chains" value="I=1-108"/>
</dbReference>
<dbReference type="PDB" id="7AEA">
    <property type="method" value="EM"/>
    <property type="resolution" value="3.40 A"/>
    <property type="chains" value="I=1-108"/>
</dbReference>
<dbReference type="PDB" id="7AST">
    <property type="method" value="EM"/>
    <property type="resolution" value="4.00 A"/>
    <property type="chains" value="A=1-108"/>
</dbReference>
<dbReference type="PDB" id="7D58">
    <property type="method" value="EM"/>
    <property type="resolution" value="2.90 A"/>
    <property type="chains" value="I=1-108"/>
</dbReference>
<dbReference type="PDB" id="7D59">
    <property type="method" value="EM"/>
    <property type="resolution" value="3.10 A"/>
    <property type="chains" value="I=1-108"/>
</dbReference>
<dbReference type="PDB" id="7DN3">
    <property type="method" value="EM"/>
    <property type="resolution" value="3.50 A"/>
    <property type="chains" value="I=1-108"/>
</dbReference>
<dbReference type="PDB" id="7DU2">
    <property type="method" value="EM"/>
    <property type="resolution" value="3.35 A"/>
    <property type="chains" value="I=1-108"/>
</dbReference>
<dbReference type="PDB" id="7FJI">
    <property type="method" value="EM"/>
    <property type="resolution" value="3.60 A"/>
    <property type="chains" value="I=1-108"/>
</dbReference>
<dbReference type="PDB" id="7FJJ">
    <property type="method" value="EM"/>
    <property type="resolution" value="3.60 A"/>
    <property type="chains" value="I=1-108"/>
</dbReference>
<dbReference type="PDB" id="8ITY">
    <property type="method" value="EM"/>
    <property type="resolution" value="3.90 A"/>
    <property type="chains" value="I=1-108"/>
</dbReference>
<dbReference type="PDB" id="8IUE">
    <property type="method" value="EM"/>
    <property type="resolution" value="4.10 A"/>
    <property type="chains" value="I=1-108"/>
</dbReference>
<dbReference type="PDB" id="8IUH">
    <property type="method" value="EM"/>
    <property type="resolution" value="3.40 A"/>
    <property type="chains" value="I=1-108"/>
</dbReference>
<dbReference type="PDB" id="9FSO">
    <property type="method" value="EM"/>
    <property type="resolution" value="3.28 A"/>
    <property type="chains" value="J=1-108"/>
</dbReference>
<dbReference type="PDB" id="9FSP">
    <property type="method" value="EM"/>
    <property type="resolution" value="3.39 A"/>
    <property type="chains" value="J=1-108"/>
</dbReference>
<dbReference type="PDB" id="9FSQ">
    <property type="method" value="EM"/>
    <property type="resolution" value="3.51 A"/>
    <property type="chains" value="J=1-108"/>
</dbReference>
<dbReference type="PDB" id="9FSR">
    <property type="method" value="EM"/>
    <property type="resolution" value="3.76 A"/>
    <property type="chains" value="J=1-108"/>
</dbReference>
<dbReference type="PDB" id="9FSS">
    <property type="method" value="EM"/>
    <property type="resolution" value="4.14 A"/>
    <property type="chains" value="J=1-108"/>
</dbReference>
<dbReference type="PDBsum" id="7A6H"/>
<dbReference type="PDBsum" id="7AE1"/>
<dbReference type="PDBsum" id="7AE3"/>
<dbReference type="PDBsum" id="7AEA"/>
<dbReference type="PDBsum" id="7AST"/>
<dbReference type="PDBsum" id="7D58"/>
<dbReference type="PDBsum" id="7D59"/>
<dbReference type="PDBsum" id="7DN3"/>
<dbReference type="PDBsum" id="7DU2"/>
<dbReference type="PDBsum" id="7FJI"/>
<dbReference type="PDBsum" id="7FJJ"/>
<dbReference type="PDBsum" id="8ITY"/>
<dbReference type="PDBsum" id="8IUE"/>
<dbReference type="PDBsum" id="8IUH"/>
<dbReference type="PDBsum" id="9FSO"/>
<dbReference type="PDBsum" id="9FSP"/>
<dbReference type="PDBsum" id="9FSQ"/>
<dbReference type="PDBsum" id="9FSR"/>
<dbReference type="PDBsum" id="9FSS"/>
<dbReference type="EMDB" id="EMD-11673"/>
<dbReference type="EMDB" id="EMD-11736"/>
<dbReference type="EMDB" id="EMD-11738"/>
<dbReference type="EMDB" id="EMD-11742"/>
<dbReference type="EMDB" id="EMD-11904"/>
<dbReference type="EMDB" id="EMD-30577"/>
<dbReference type="EMDB" id="EMD-30578"/>
<dbReference type="EMDB" id="EMD-30779"/>
<dbReference type="EMDB" id="EMD-30865"/>
<dbReference type="EMDB" id="EMD-31621"/>
<dbReference type="EMDB" id="EMD-31622"/>
<dbReference type="EMDB" id="EMD-35712"/>
<dbReference type="EMDB" id="EMD-35719"/>
<dbReference type="EMDB" id="EMD-35722"/>
<dbReference type="EMDB" id="EMD-50730"/>
<dbReference type="EMDB" id="EMD-50731"/>
<dbReference type="EMDB" id="EMD-50732"/>
<dbReference type="EMDB" id="EMD-50733"/>
<dbReference type="EMDB" id="EMD-50734"/>
<dbReference type="SMR" id="Q9Y2Y1"/>
<dbReference type="BioGRID" id="119701">
    <property type="interactions" value="90"/>
</dbReference>
<dbReference type="ComplexPortal" id="CPX-2393">
    <property type="entry name" value="DNA-directed RNA polymerase III complex, POLR3G variant"/>
</dbReference>
<dbReference type="ComplexPortal" id="CPX-7482">
    <property type="entry name" value="DNA-directed RNA polymerase III complex, POLR3GL variant"/>
</dbReference>
<dbReference type="CORUM" id="Q9Y2Y1"/>
<dbReference type="FunCoup" id="Q9Y2Y1">
    <property type="interactions" value="2134"/>
</dbReference>
<dbReference type="IntAct" id="Q9Y2Y1">
    <property type="interactions" value="60"/>
</dbReference>
<dbReference type="MINT" id="Q9Y2Y1"/>
<dbReference type="STRING" id="9606.ENSP00000293860"/>
<dbReference type="GlyGen" id="Q9Y2Y1">
    <property type="glycosylation" value="2 sites, 1 O-linked glycan (1 site)"/>
</dbReference>
<dbReference type="iPTMnet" id="Q9Y2Y1"/>
<dbReference type="PhosphoSitePlus" id="Q9Y2Y1"/>
<dbReference type="SwissPalm" id="Q9Y2Y1"/>
<dbReference type="BioMuta" id="POLR3K"/>
<dbReference type="DMDM" id="116242768"/>
<dbReference type="jPOST" id="Q9Y2Y1"/>
<dbReference type="MassIVE" id="Q9Y2Y1"/>
<dbReference type="PaxDb" id="9606-ENSP00000293860"/>
<dbReference type="PeptideAtlas" id="Q9Y2Y1"/>
<dbReference type="ProteomicsDB" id="85935"/>
<dbReference type="Pumba" id="Q9Y2Y1"/>
<dbReference type="Antibodypedia" id="1811">
    <property type="antibodies" value="155 antibodies from 24 providers"/>
</dbReference>
<dbReference type="DNASU" id="51728"/>
<dbReference type="Ensembl" id="ENST00000293860.6">
    <property type="protein sequence ID" value="ENSP00000293860.5"/>
    <property type="gene ID" value="ENSG00000161980.6"/>
</dbReference>
<dbReference type="GeneID" id="51728"/>
<dbReference type="KEGG" id="hsa:51728"/>
<dbReference type="MANE-Select" id="ENST00000293860.6">
    <property type="protein sequence ID" value="ENSP00000293860.5"/>
    <property type="RefSeq nucleotide sequence ID" value="NM_016310.5"/>
    <property type="RefSeq protein sequence ID" value="NP_057394.3"/>
</dbReference>
<dbReference type="UCSC" id="uc002cfi.3">
    <property type="organism name" value="human"/>
</dbReference>
<dbReference type="AGR" id="HGNC:14121"/>
<dbReference type="CTD" id="51728"/>
<dbReference type="DisGeNET" id="51728"/>
<dbReference type="GeneCards" id="POLR3K"/>
<dbReference type="HGNC" id="HGNC:14121">
    <property type="gene designation" value="POLR3K"/>
</dbReference>
<dbReference type="HPA" id="ENSG00000161980">
    <property type="expression patterns" value="Low tissue specificity"/>
</dbReference>
<dbReference type="MalaCards" id="POLR3K"/>
<dbReference type="MIM" id="606007">
    <property type="type" value="gene"/>
</dbReference>
<dbReference type="MIM" id="619310">
    <property type="type" value="phenotype"/>
</dbReference>
<dbReference type="neXtProt" id="NX_Q9Y2Y1"/>
<dbReference type="OpenTargets" id="ENSG00000161980"/>
<dbReference type="PharmGKB" id="PA33521"/>
<dbReference type="VEuPathDB" id="HostDB:ENSG00000161980"/>
<dbReference type="eggNOG" id="KOG2906">
    <property type="taxonomic scope" value="Eukaryota"/>
</dbReference>
<dbReference type="GeneTree" id="ENSGT00550000075071"/>
<dbReference type="HOGENOM" id="CLU_093932_3_0_1"/>
<dbReference type="InParanoid" id="Q9Y2Y1"/>
<dbReference type="OMA" id="MEFCDEC"/>
<dbReference type="OrthoDB" id="282152at2759"/>
<dbReference type="PAN-GO" id="Q9Y2Y1">
    <property type="GO annotations" value="3 GO annotations based on evolutionary models"/>
</dbReference>
<dbReference type="PhylomeDB" id="Q9Y2Y1"/>
<dbReference type="TreeFam" id="TF103031"/>
<dbReference type="PathwayCommons" id="Q9Y2Y1"/>
<dbReference type="Reactome" id="R-HSA-1834949">
    <property type="pathway name" value="Cytosolic sensors of pathogen-associated DNA"/>
</dbReference>
<dbReference type="Reactome" id="R-HSA-73780">
    <property type="pathway name" value="RNA Polymerase III Chain Elongation"/>
</dbReference>
<dbReference type="Reactome" id="R-HSA-73980">
    <property type="pathway name" value="RNA Polymerase III Transcription Termination"/>
</dbReference>
<dbReference type="Reactome" id="R-HSA-749476">
    <property type="pathway name" value="RNA Polymerase III Abortive And Retractive Initiation"/>
</dbReference>
<dbReference type="Reactome" id="R-HSA-76061">
    <property type="pathway name" value="RNA Polymerase III Transcription Initiation From Type 1 Promoter"/>
</dbReference>
<dbReference type="Reactome" id="R-HSA-76066">
    <property type="pathway name" value="RNA Polymerase III Transcription Initiation From Type 2 Promoter"/>
</dbReference>
<dbReference type="Reactome" id="R-HSA-76071">
    <property type="pathway name" value="RNA Polymerase III Transcription Initiation From Type 3 Promoter"/>
</dbReference>
<dbReference type="SignaLink" id="Q9Y2Y1"/>
<dbReference type="SIGNOR" id="Q9Y2Y1"/>
<dbReference type="BioGRID-ORCS" id="51728">
    <property type="hits" value="796 hits in 1163 CRISPR screens"/>
</dbReference>
<dbReference type="ChiTaRS" id="POLR3K">
    <property type="organism name" value="human"/>
</dbReference>
<dbReference type="GeneWiki" id="POLR3K"/>
<dbReference type="GenomeRNAi" id="51728"/>
<dbReference type="Pharos" id="Q9Y2Y1">
    <property type="development level" value="Tbio"/>
</dbReference>
<dbReference type="PRO" id="PR:Q9Y2Y1"/>
<dbReference type="Proteomes" id="UP000005640">
    <property type="component" value="Chromosome 16"/>
</dbReference>
<dbReference type="RNAct" id="Q9Y2Y1">
    <property type="molecule type" value="protein"/>
</dbReference>
<dbReference type="Bgee" id="ENSG00000161980">
    <property type="expression patterns" value="Expressed in mucosa of transverse colon and 196 other cell types or tissues"/>
</dbReference>
<dbReference type="GO" id="GO:0005829">
    <property type="term" value="C:cytosol"/>
    <property type="evidence" value="ECO:0000304"/>
    <property type="project" value="Reactome"/>
</dbReference>
<dbReference type="GO" id="GO:0005654">
    <property type="term" value="C:nucleoplasm"/>
    <property type="evidence" value="ECO:0000304"/>
    <property type="project" value="Reactome"/>
</dbReference>
<dbReference type="GO" id="GO:0005666">
    <property type="term" value="C:RNA polymerase III complex"/>
    <property type="evidence" value="ECO:0000314"/>
    <property type="project" value="UniProtKB"/>
</dbReference>
<dbReference type="GO" id="GO:0003899">
    <property type="term" value="F:DNA-directed RNA polymerase activity"/>
    <property type="evidence" value="ECO:0000304"/>
    <property type="project" value="ProtInc"/>
</dbReference>
<dbReference type="GO" id="GO:0003676">
    <property type="term" value="F:nucleic acid binding"/>
    <property type="evidence" value="ECO:0007669"/>
    <property type="project" value="InterPro"/>
</dbReference>
<dbReference type="GO" id="GO:0008270">
    <property type="term" value="F:zinc ion binding"/>
    <property type="evidence" value="ECO:0000314"/>
    <property type="project" value="UniProtKB"/>
</dbReference>
<dbReference type="GO" id="GO:0051607">
    <property type="term" value="P:defense response to virus"/>
    <property type="evidence" value="ECO:0007669"/>
    <property type="project" value="UniProtKB-KW"/>
</dbReference>
<dbReference type="GO" id="GO:0045087">
    <property type="term" value="P:innate immune response"/>
    <property type="evidence" value="ECO:0007669"/>
    <property type="project" value="UniProtKB-KW"/>
</dbReference>
<dbReference type="GO" id="GO:0006383">
    <property type="term" value="P:transcription by RNA polymerase III"/>
    <property type="evidence" value="ECO:0000304"/>
    <property type="project" value="ProtInc"/>
</dbReference>
<dbReference type="CDD" id="cd10509">
    <property type="entry name" value="Zn-ribbon_RPC11"/>
    <property type="match status" value="1"/>
</dbReference>
<dbReference type="FunFam" id="2.20.25.10:FF:000005">
    <property type="entry name" value="DNA-directed RNA polymerase subunit"/>
    <property type="match status" value="1"/>
</dbReference>
<dbReference type="Gene3D" id="2.20.25.10">
    <property type="match status" value="1"/>
</dbReference>
<dbReference type="InterPro" id="IPR019761">
    <property type="entry name" value="DNA-dir_RNA_pol-M_15_CS"/>
</dbReference>
<dbReference type="InterPro" id="IPR012164">
    <property type="entry name" value="Rpa12/Rpb9/Rpc10/TFS"/>
</dbReference>
<dbReference type="InterPro" id="IPR001529">
    <property type="entry name" value="Zn_ribbon_RPB9"/>
</dbReference>
<dbReference type="InterPro" id="IPR034014">
    <property type="entry name" value="Zn_ribbon_RPC11_C"/>
</dbReference>
<dbReference type="InterPro" id="IPR001222">
    <property type="entry name" value="Znf_TFIIS"/>
</dbReference>
<dbReference type="PANTHER" id="PTHR11239">
    <property type="entry name" value="DNA-DIRECTED RNA POLYMERASE"/>
    <property type="match status" value="1"/>
</dbReference>
<dbReference type="PANTHER" id="PTHR11239:SF12">
    <property type="entry name" value="DNA-DIRECTED RNA POLYMERASE III SUBUNIT RPC10"/>
    <property type="match status" value="1"/>
</dbReference>
<dbReference type="Pfam" id="PF02150">
    <property type="entry name" value="Zn_ribbon_RPB9"/>
    <property type="match status" value="1"/>
</dbReference>
<dbReference type="Pfam" id="PF01096">
    <property type="entry name" value="Zn_ribbon_TFIIS"/>
    <property type="match status" value="1"/>
</dbReference>
<dbReference type="PIRSF" id="PIRSF005586">
    <property type="entry name" value="RNApol_RpoM"/>
    <property type="match status" value="1"/>
</dbReference>
<dbReference type="SMART" id="SM00661">
    <property type="entry name" value="RPOL9"/>
    <property type="match status" value="1"/>
</dbReference>
<dbReference type="SMART" id="SM00440">
    <property type="entry name" value="ZnF_C2C2"/>
    <property type="match status" value="1"/>
</dbReference>
<dbReference type="SUPFAM" id="SSF57783">
    <property type="entry name" value="Zinc beta-ribbon"/>
    <property type="match status" value="1"/>
</dbReference>
<dbReference type="PROSITE" id="PS01030">
    <property type="entry name" value="RNA_POL_M_15KD"/>
    <property type="match status" value="1"/>
</dbReference>
<dbReference type="PROSITE" id="PS00466">
    <property type="entry name" value="ZF_TFIIS_1"/>
    <property type="match status" value="1"/>
</dbReference>
<dbReference type="PROSITE" id="PS51133">
    <property type="entry name" value="ZF_TFIIS_2"/>
    <property type="match status" value="1"/>
</dbReference>
<evidence type="ECO:0000250" key="1">
    <source>
        <dbReference type="UniProtKB" id="Q04307"/>
    </source>
</evidence>
<evidence type="ECO:0000255" key="2"/>
<evidence type="ECO:0000255" key="3">
    <source>
        <dbReference type="PROSITE-ProRule" id="PRU00472"/>
    </source>
</evidence>
<evidence type="ECO:0000255" key="4">
    <source>
        <dbReference type="PROSITE-ProRule" id="PRU10145"/>
    </source>
</evidence>
<evidence type="ECO:0000269" key="5">
    <source>
    </source>
</evidence>
<evidence type="ECO:0000269" key="6">
    <source>
    </source>
</evidence>
<evidence type="ECO:0000269" key="7">
    <source>
    </source>
</evidence>
<evidence type="ECO:0000269" key="8">
    <source>
    </source>
</evidence>
<evidence type="ECO:0000269" key="9">
    <source>
    </source>
</evidence>
<evidence type="ECO:0000269" key="10">
    <source>
    </source>
</evidence>
<evidence type="ECO:0000269" key="11">
    <source>
    </source>
</evidence>
<evidence type="ECO:0000269" key="12">
    <source>
    </source>
</evidence>
<evidence type="ECO:0000269" key="13">
    <source>
    </source>
</evidence>
<evidence type="ECO:0000269" key="14">
    <source>
    </source>
</evidence>
<evidence type="ECO:0000303" key="15">
    <source>
    </source>
</evidence>
<evidence type="ECO:0000305" key="16"/>
<evidence type="ECO:0000305" key="17">
    <source>
    </source>
</evidence>
<evidence type="ECO:0000312" key="18">
    <source>
        <dbReference type="HGNC" id="HGNC:14121"/>
    </source>
</evidence>
<evidence type="ECO:0007744" key="19">
    <source>
        <dbReference type="PDB" id="7AE1"/>
    </source>
</evidence>
<evidence type="ECO:0007744" key="20">
    <source>
        <dbReference type="PDB" id="7D58"/>
    </source>
</evidence>
<evidence type="ECO:0007744" key="21">
    <source>
        <dbReference type="PDB" id="7DN3"/>
    </source>
</evidence>
<evidence type="ECO:0007744" key="22">
    <source>
        <dbReference type="PDB" id="7FJI"/>
    </source>
</evidence>
<evidence type="ECO:0007829" key="23">
    <source>
        <dbReference type="PDB" id="7AE1"/>
    </source>
</evidence>
<evidence type="ECO:0007829" key="24">
    <source>
        <dbReference type="PDB" id="7D58"/>
    </source>
</evidence>